<protein>
    <recommendedName>
        <fullName>Probable protein-export membrane protein SecG</fullName>
    </recommendedName>
</protein>
<proteinExistence type="inferred from homology"/>
<dbReference type="EMBL" id="AP008934">
    <property type="protein sequence ID" value="BAE19054.1"/>
    <property type="molecule type" value="Genomic_DNA"/>
</dbReference>
<dbReference type="RefSeq" id="WP_011303582.1">
    <property type="nucleotide sequence ID" value="NZ_MTGA01000039.1"/>
</dbReference>
<dbReference type="SMR" id="Q49W06"/>
<dbReference type="GeneID" id="66868094"/>
<dbReference type="KEGG" id="ssp:SSP1909"/>
<dbReference type="eggNOG" id="COG1314">
    <property type="taxonomic scope" value="Bacteria"/>
</dbReference>
<dbReference type="HOGENOM" id="CLU_094156_6_1_9"/>
<dbReference type="OrthoDB" id="1651166at2"/>
<dbReference type="Proteomes" id="UP000006371">
    <property type="component" value="Chromosome"/>
</dbReference>
<dbReference type="GO" id="GO:0005886">
    <property type="term" value="C:plasma membrane"/>
    <property type="evidence" value="ECO:0007669"/>
    <property type="project" value="UniProtKB-SubCell"/>
</dbReference>
<dbReference type="GO" id="GO:0015450">
    <property type="term" value="F:protein-transporting ATPase activity"/>
    <property type="evidence" value="ECO:0007669"/>
    <property type="project" value="InterPro"/>
</dbReference>
<dbReference type="GO" id="GO:0065002">
    <property type="term" value="P:intracellular protein transmembrane transport"/>
    <property type="evidence" value="ECO:0007669"/>
    <property type="project" value="TreeGrafter"/>
</dbReference>
<dbReference type="GO" id="GO:0009306">
    <property type="term" value="P:protein secretion"/>
    <property type="evidence" value="ECO:0007669"/>
    <property type="project" value="InterPro"/>
</dbReference>
<dbReference type="GO" id="GO:0043952">
    <property type="term" value="P:protein transport by the Sec complex"/>
    <property type="evidence" value="ECO:0007669"/>
    <property type="project" value="TreeGrafter"/>
</dbReference>
<dbReference type="InterPro" id="IPR004692">
    <property type="entry name" value="SecG"/>
</dbReference>
<dbReference type="NCBIfam" id="TIGR00810">
    <property type="entry name" value="secG"/>
    <property type="match status" value="1"/>
</dbReference>
<dbReference type="PANTHER" id="PTHR34182">
    <property type="entry name" value="PROTEIN-EXPORT MEMBRANE PROTEIN SECG"/>
    <property type="match status" value="1"/>
</dbReference>
<dbReference type="PANTHER" id="PTHR34182:SF1">
    <property type="entry name" value="PROTEIN-EXPORT MEMBRANE PROTEIN SECG"/>
    <property type="match status" value="1"/>
</dbReference>
<dbReference type="Pfam" id="PF03840">
    <property type="entry name" value="SecG"/>
    <property type="match status" value="1"/>
</dbReference>
<dbReference type="PRINTS" id="PR01651">
    <property type="entry name" value="SECGEXPORT"/>
</dbReference>
<evidence type="ECO:0000250" key="1"/>
<evidence type="ECO:0000255" key="2"/>
<evidence type="ECO:0000305" key="3"/>
<accession>Q49W06</accession>
<comment type="function">
    <text evidence="1">Involved in protein export. Participates in an early event of protein translocation (By similarity).</text>
</comment>
<comment type="subcellular location">
    <subcellularLocation>
        <location evidence="1">Cell membrane</location>
        <topology evidence="1">Multi-pass membrane protein</topology>
    </subcellularLocation>
</comment>
<comment type="similarity">
    <text evidence="3">Belongs to the SecG family.</text>
</comment>
<sequence>MHTLIMVLLILDCIALVTVVLLQEGKSNGLSGAISGGAEQLFGKQKQRGIDLFLHRLTIVLSVIFFLLMLGISYFGL</sequence>
<organism>
    <name type="scientific">Staphylococcus saprophyticus subsp. saprophyticus (strain ATCC 15305 / DSM 20229 / NCIMB 8711 / NCTC 7292 / S-41)</name>
    <dbReference type="NCBI Taxonomy" id="342451"/>
    <lineage>
        <taxon>Bacteria</taxon>
        <taxon>Bacillati</taxon>
        <taxon>Bacillota</taxon>
        <taxon>Bacilli</taxon>
        <taxon>Bacillales</taxon>
        <taxon>Staphylococcaceae</taxon>
        <taxon>Staphylococcus</taxon>
    </lineage>
</organism>
<feature type="chain" id="PRO_0000157249" description="Probable protein-export membrane protein SecG">
    <location>
        <begin position="1"/>
        <end position="77"/>
    </location>
</feature>
<feature type="transmembrane region" description="Helical" evidence="2">
    <location>
        <begin position="2"/>
        <end position="22"/>
    </location>
</feature>
<feature type="transmembrane region" description="Helical" evidence="2">
    <location>
        <begin position="57"/>
        <end position="77"/>
    </location>
</feature>
<reference key="1">
    <citation type="journal article" date="2005" name="Proc. Natl. Acad. Sci. U.S.A.">
        <title>Whole genome sequence of Staphylococcus saprophyticus reveals the pathogenesis of uncomplicated urinary tract infection.</title>
        <authorList>
            <person name="Kuroda M."/>
            <person name="Yamashita A."/>
            <person name="Hirakawa H."/>
            <person name="Kumano M."/>
            <person name="Morikawa K."/>
            <person name="Higashide M."/>
            <person name="Maruyama A."/>
            <person name="Inose Y."/>
            <person name="Matoba K."/>
            <person name="Toh H."/>
            <person name="Kuhara S."/>
            <person name="Hattori M."/>
            <person name="Ohta T."/>
        </authorList>
    </citation>
    <scope>NUCLEOTIDE SEQUENCE [LARGE SCALE GENOMIC DNA]</scope>
    <source>
        <strain>ATCC 15305 / DSM 20229 / NCIMB 8711 / NCTC 7292 / S-41</strain>
    </source>
</reference>
<name>SECG_STAS1</name>
<gene>
    <name type="primary">secG</name>
    <name type="ordered locus">SSP1909</name>
</gene>
<keyword id="KW-1003">Cell membrane</keyword>
<keyword id="KW-0472">Membrane</keyword>
<keyword id="KW-0653">Protein transport</keyword>
<keyword id="KW-1185">Reference proteome</keyword>
<keyword id="KW-0811">Translocation</keyword>
<keyword id="KW-0812">Transmembrane</keyword>
<keyword id="KW-1133">Transmembrane helix</keyword>
<keyword id="KW-0813">Transport</keyword>